<gene>
    <name evidence="1" type="primary">dnaG</name>
    <name type="ordered locus">TON_0188</name>
</gene>
<keyword id="KW-0235">DNA replication</keyword>
<keyword id="KW-0240">DNA-directed RNA polymerase</keyword>
<keyword id="KW-0271">Exosome</keyword>
<keyword id="KW-0460">Magnesium</keyword>
<keyword id="KW-0479">Metal-binding</keyword>
<keyword id="KW-0548">Nucleotidyltransferase</keyword>
<keyword id="KW-0639">Primosome</keyword>
<keyword id="KW-0804">Transcription</keyword>
<keyword id="KW-0808">Transferase</keyword>
<accession>B6YSY6</accession>
<evidence type="ECO:0000255" key="1">
    <source>
        <dbReference type="HAMAP-Rule" id="MF_00007"/>
    </source>
</evidence>
<evidence type="ECO:0000256" key="2">
    <source>
        <dbReference type="SAM" id="MobiDB-lite"/>
    </source>
</evidence>
<sequence length="464" mass="52003">MKRKKTVLHHILAEKQKFEKRKEGGSMSAKDEFGTTKYVIYAEFEANGIVERPDVVGAIFGQTEGLLGDDLDLRELQKTGRIGRIRVEVHAKAGKTYGTITVPSSLDRVETAILAAALETIDRVGPAEAKIKVLRIEDVRATKRKYIIERAKEILETLMEQEIPETQELTEEVKKAVRAKELIEYGPEKLPAGPHVPFSDSIIVVEGRADVLNLLKHGIKNAIAVEGTSVPETIIKLSKERIVTAFTDGDRGGELILKELLQVADVDYVARAPEGKEVEELTKKEIVKALRSKVPAEQVITEIFYKGRNFYEVIKEKERAKNGREEKVREVKPPAPAPAPAPAPKPIEKPEPKEREEKIVKPIQQPRPSELDEFGEFIEKVKSSKDSMALLLDKDKSVIAEIPVRELTNQLKERKDVYAVVFNGVITQRLIDTVSESGVKYLVGARKYNVVRRPVNLKIVTFAE</sequence>
<organism>
    <name type="scientific">Thermococcus onnurineus (strain NA1)</name>
    <dbReference type="NCBI Taxonomy" id="523850"/>
    <lineage>
        <taxon>Archaea</taxon>
        <taxon>Methanobacteriati</taxon>
        <taxon>Methanobacteriota</taxon>
        <taxon>Thermococci</taxon>
        <taxon>Thermococcales</taxon>
        <taxon>Thermococcaceae</taxon>
        <taxon>Thermococcus</taxon>
    </lineage>
</organism>
<reference key="1">
    <citation type="journal article" date="2008" name="J. Bacteriol.">
        <title>The complete genome sequence of Thermococcus onnurineus NA1 reveals a mixed heterotrophic and carboxydotrophic metabolism.</title>
        <authorList>
            <person name="Lee H.S."/>
            <person name="Kang S.G."/>
            <person name="Bae S.S."/>
            <person name="Lim J.K."/>
            <person name="Cho Y."/>
            <person name="Kim Y.J."/>
            <person name="Jeon J.H."/>
            <person name="Cha S.-S."/>
            <person name="Kwon K.K."/>
            <person name="Kim H.-T."/>
            <person name="Park C.-J."/>
            <person name="Lee H.-W."/>
            <person name="Kim S.I."/>
            <person name="Chun J."/>
            <person name="Colwell R.R."/>
            <person name="Kim S.-J."/>
            <person name="Lee J.-H."/>
        </authorList>
    </citation>
    <scope>NUCLEOTIDE SEQUENCE [LARGE SCALE GENOMIC DNA]</scope>
    <source>
        <strain>NA1</strain>
    </source>
</reference>
<feature type="chain" id="PRO_1000089139" description="DNA primase DnaG">
    <location>
        <begin position="1"/>
        <end position="464"/>
    </location>
</feature>
<feature type="domain" description="Toprim" evidence="1">
    <location>
        <begin position="200"/>
        <end position="274"/>
    </location>
</feature>
<feature type="region of interest" description="Disordered" evidence="2">
    <location>
        <begin position="322"/>
        <end position="359"/>
    </location>
</feature>
<feature type="compositionally biased region" description="Basic and acidic residues" evidence="2">
    <location>
        <begin position="322"/>
        <end position="332"/>
    </location>
</feature>
<feature type="compositionally biased region" description="Pro residues" evidence="2">
    <location>
        <begin position="333"/>
        <end position="345"/>
    </location>
</feature>
<feature type="compositionally biased region" description="Basic and acidic residues" evidence="2">
    <location>
        <begin position="346"/>
        <end position="359"/>
    </location>
</feature>
<feature type="binding site" evidence="1">
    <location>
        <position position="206"/>
    </location>
    <ligand>
        <name>Mg(2+)</name>
        <dbReference type="ChEBI" id="CHEBI:18420"/>
        <label>1</label>
        <note>catalytic</note>
    </ligand>
</feature>
<feature type="binding site" evidence="1">
    <location>
        <position position="248"/>
    </location>
    <ligand>
        <name>Mg(2+)</name>
        <dbReference type="ChEBI" id="CHEBI:18420"/>
        <label>1</label>
        <note>catalytic</note>
    </ligand>
</feature>
<feature type="binding site" evidence="1">
    <location>
        <position position="248"/>
    </location>
    <ligand>
        <name>Mg(2+)</name>
        <dbReference type="ChEBI" id="CHEBI:18420"/>
        <label>2</label>
    </ligand>
</feature>
<feature type="binding site" evidence="1">
    <location>
        <position position="250"/>
    </location>
    <ligand>
        <name>Mg(2+)</name>
        <dbReference type="ChEBI" id="CHEBI:18420"/>
        <label>2</label>
    </ligand>
</feature>
<comment type="function">
    <text evidence="1">RNA polymerase that catalyzes the synthesis of short RNA molecules used as primers for DNA polymerase during DNA replication. Also part of the exosome, which is a complex involved in RNA degradation. Acts as a poly(A)-binding protein that enhances the interaction between heteromeric, adenine-rich transcripts and the exosome.</text>
</comment>
<comment type="catalytic activity">
    <reaction evidence="1">
        <text>ssDNA + n NTP = ssDNA/pppN(pN)n-1 hybrid + (n-1) diphosphate.</text>
        <dbReference type="EC" id="2.7.7.101"/>
    </reaction>
</comment>
<comment type="cofactor">
    <cofactor evidence="1">
        <name>Mg(2+)</name>
        <dbReference type="ChEBI" id="CHEBI:18420"/>
    </cofactor>
    <text evidence="1">Binds two Mg(2+) per subunit.</text>
</comment>
<comment type="subunit">
    <text evidence="1">Forms a ternary complex with MCM helicase and DNA. Component of the archaeal exosome complex.</text>
</comment>
<comment type="similarity">
    <text evidence="1">Belongs to the archaeal DnaG primase family.</text>
</comment>
<name>DNAG_THEON</name>
<proteinExistence type="inferred from homology"/>
<dbReference type="EC" id="2.7.7.101" evidence="1"/>
<dbReference type="EMBL" id="CP000855">
    <property type="protein sequence ID" value="ACJ15673.1"/>
    <property type="molecule type" value="Genomic_DNA"/>
</dbReference>
<dbReference type="RefSeq" id="WP_012571146.1">
    <property type="nucleotide sequence ID" value="NC_011529.1"/>
</dbReference>
<dbReference type="SMR" id="B6YSY6"/>
<dbReference type="STRING" id="523850.TON_0188"/>
<dbReference type="GeneID" id="7017845"/>
<dbReference type="KEGG" id="ton:TON_0188"/>
<dbReference type="PATRIC" id="fig|523850.10.peg.188"/>
<dbReference type="eggNOG" id="arCOG04281">
    <property type="taxonomic scope" value="Archaea"/>
</dbReference>
<dbReference type="HOGENOM" id="CLU_034626_0_0_2"/>
<dbReference type="OrthoDB" id="8643at2157"/>
<dbReference type="Proteomes" id="UP000002727">
    <property type="component" value="Chromosome"/>
</dbReference>
<dbReference type="GO" id="GO:0005737">
    <property type="term" value="C:cytoplasm"/>
    <property type="evidence" value="ECO:0007669"/>
    <property type="project" value="TreeGrafter"/>
</dbReference>
<dbReference type="GO" id="GO:0000428">
    <property type="term" value="C:DNA-directed RNA polymerase complex"/>
    <property type="evidence" value="ECO:0007669"/>
    <property type="project" value="UniProtKB-KW"/>
</dbReference>
<dbReference type="GO" id="GO:0000178">
    <property type="term" value="C:exosome (RNase complex)"/>
    <property type="evidence" value="ECO:0007669"/>
    <property type="project" value="UniProtKB-KW"/>
</dbReference>
<dbReference type="GO" id="GO:1990077">
    <property type="term" value="C:primosome complex"/>
    <property type="evidence" value="ECO:0007669"/>
    <property type="project" value="UniProtKB-KW"/>
</dbReference>
<dbReference type="GO" id="GO:0003899">
    <property type="term" value="F:DNA-directed RNA polymerase activity"/>
    <property type="evidence" value="ECO:0007669"/>
    <property type="project" value="InterPro"/>
</dbReference>
<dbReference type="GO" id="GO:0046872">
    <property type="term" value="F:metal ion binding"/>
    <property type="evidence" value="ECO:0007669"/>
    <property type="project" value="UniProtKB-KW"/>
</dbReference>
<dbReference type="GO" id="GO:0008143">
    <property type="term" value="F:poly(A) binding"/>
    <property type="evidence" value="ECO:0007669"/>
    <property type="project" value="InterPro"/>
</dbReference>
<dbReference type="GO" id="GO:0006269">
    <property type="term" value="P:DNA replication, synthesis of primer"/>
    <property type="evidence" value="ECO:0007669"/>
    <property type="project" value="UniProtKB-UniRule"/>
</dbReference>
<dbReference type="CDD" id="cd01029">
    <property type="entry name" value="TOPRIM_primases"/>
    <property type="match status" value="1"/>
</dbReference>
<dbReference type="FunFam" id="3.40.1360.10:FF:000010">
    <property type="entry name" value="DNA primase DnaG"/>
    <property type="match status" value="1"/>
</dbReference>
<dbReference type="Gene3D" id="3.40.1360.10">
    <property type="match status" value="1"/>
</dbReference>
<dbReference type="HAMAP" id="MF_00007">
    <property type="entry name" value="DNA_primase_DnaG_arc"/>
    <property type="match status" value="1"/>
</dbReference>
<dbReference type="InterPro" id="IPR050219">
    <property type="entry name" value="DnaG_primase"/>
</dbReference>
<dbReference type="InterPro" id="IPR020607">
    <property type="entry name" value="Primase_DnaG_arc"/>
</dbReference>
<dbReference type="InterPro" id="IPR034154">
    <property type="entry name" value="TOPRIM_DnaG/twinkle"/>
</dbReference>
<dbReference type="InterPro" id="IPR006171">
    <property type="entry name" value="TOPRIM_dom"/>
</dbReference>
<dbReference type="NCBIfam" id="NF003108">
    <property type="entry name" value="PRK04031.1-1"/>
    <property type="match status" value="1"/>
</dbReference>
<dbReference type="PANTHER" id="PTHR30313">
    <property type="entry name" value="DNA PRIMASE"/>
    <property type="match status" value="1"/>
</dbReference>
<dbReference type="PANTHER" id="PTHR30313:SF2">
    <property type="entry name" value="DNA PRIMASE"/>
    <property type="match status" value="1"/>
</dbReference>
<dbReference type="Pfam" id="PF13662">
    <property type="entry name" value="Toprim_4"/>
    <property type="match status" value="1"/>
</dbReference>
<dbReference type="SMART" id="SM00493">
    <property type="entry name" value="TOPRIM"/>
    <property type="match status" value="1"/>
</dbReference>
<dbReference type="SUPFAM" id="SSF56731">
    <property type="entry name" value="DNA primase core"/>
    <property type="match status" value="1"/>
</dbReference>
<dbReference type="PROSITE" id="PS50880">
    <property type="entry name" value="TOPRIM"/>
    <property type="match status" value="1"/>
</dbReference>
<protein>
    <recommendedName>
        <fullName evidence="1">DNA primase DnaG</fullName>
        <ecNumber evidence="1">2.7.7.101</ecNumber>
    </recommendedName>
</protein>